<name>ASSY_BRUMB</name>
<keyword id="KW-0028">Amino-acid biosynthesis</keyword>
<keyword id="KW-0055">Arginine biosynthesis</keyword>
<keyword id="KW-0067">ATP-binding</keyword>
<keyword id="KW-0963">Cytoplasm</keyword>
<keyword id="KW-0436">Ligase</keyword>
<keyword id="KW-0547">Nucleotide-binding</keyword>
<evidence type="ECO:0000255" key="1">
    <source>
        <dbReference type="HAMAP-Rule" id="MF_00005"/>
    </source>
</evidence>
<accession>C0RGD6</accession>
<dbReference type="EC" id="6.3.4.5" evidence="1"/>
<dbReference type="EMBL" id="CP001488">
    <property type="protein sequence ID" value="ACN99893.1"/>
    <property type="molecule type" value="Genomic_DNA"/>
</dbReference>
<dbReference type="RefSeq" id="WP_002965322.1">
    <property type="nucleotide sequence ID" value="NC_012441.1"/>
</dbReference>
<dbReference type="SMR" id="C0RGD6"/>
<dbReference type="KEGG" id="bmi:BMEA_A0077"/>
<dbReference type="HOGENOM" id="CLU_032784_4_2_5"/>
<dbReference type="UniPathway" id="UPA00068">
    <property type="reaction ID" value="UER00113"/>
</dbReference>
<dbReference type="Proteomes" id="UP000001748">
    <property type="component" value="Chromosome I"/>
</dbReference>
<dbReference type="GO" id="GO:0005737">
    <property type="term" value="C:cytoplasm"/>
    <property type="evidence" value="ECO:0007669"/>
    <property type="project" value="UniProtKB-SubCell"/>
</dbReference>
<dbReference type="GO" id="GO:0004055">
    <property type="term" value="F:argininosuccinate synthase activity"/>
    <property type="evidence" value="ECO:0007669"/>
    <property type="project" value="UniProtKB-UniRule"/>
</dbReference>
<dbReference type="GO" id="GO:0005524">
    <property type="term" value="F:ATP binding"/>
    <property type="evidence" value="ECO:0007669"/>
    <property type="project" value="UniProtKB-UniRule"/>
</dbReference>
<dbReference type="GO" id="GO:0000053">
    <property type="term" value="P:argininosuccinate metabolic process"/>
    <property type="evidence" value="ECO:0007669"/>
    <property type="project" value="TreeGrafter"/>
</dbReference>
<dbReference type="GO" id="GO:0006526">
    <property type="term" value="P:L-arginine biosynthetic process"/>
    <property type="evidence" value="ECO:0007669"/>
    <property type="project" value="UniProtKB-UniRule"/>
</dbReference>
<dbReference type="GO" id="GO:0000050">
    <property type="term" value="P:urea cycle"/>
    <property type="evidence" value="ECO:0007669"/>
    <property type="project" value="TreeGrafter"/>
</dbReference>
<dbReference type="CDD" id="cd01999">
    <property type="entry name" value="ASS"/>
    <property type="match status" value="1"/>
</dbReference>
<dbReference type="FunFam" id="3.40.50.620:FF:000019">
    <property type="entry name" value="Argininosuccinate synthase"/>
    <property type="match status" value="1"/>
</dbReference>
<dbReference type="FunFam" id="3.90.1260.10:FF:000007">
    <property type="entry name" value="Argininosuccinate synthase"/>
    <property type="match status" value="1"/>
</dbReference>
<dbReference type="Gene3D" id="3.90.1260.10">
    <property type="entry name" value="Argininosuccinate synthetase, chain A, domain 2"/>
    <property type="match status" value="1"/>
</dbReference>
<dbReference type="Gene3D" id="3.40.50.620">
    <property type="entry name" value="HUPs"/>
    <property type="match status" value="1"/>
</dbReference>
<dbReference type="Gene3D" id="1.20.5.470">
    <property type="entry name" value="Single helix bin"/>
    <property type="match status" value="1"/>
</dbReference>
<dbReference type="HAMAP" id="MF_00005">
    <property type="entry name" value="Arg_succ_synth_type1"/>
    <property type="match status" value="1"/>
</dbReference>
<dbReference type="InterPro" id="IPR048268">
    <property type="entry name" value="Arginosuc_syn_C"/>
</dbReference>
<dbReference type="InterPro" id="IPR048267">
    <property type="entry name" value="Arginosuc_syn_N"/>
</dbReference>
<dbReference type="InterPro" id="IPR001518">
    <property type="entry name" value="Arginosuc_synth"/>
</dbReference>
<dbReference type="InterPro" id="IPR018223">
    <property type="entry name" value="Arginosuc_synth_CS"/>
</dbReference>
<dbReference type="InterPro" id="IPR023434">
    <property type="entry name" value="Arginosuc_synth_type_1_subfam"/>
</dbReference>
<dbReference type="InterPro" id="IPR024074">
    <property type="entry name" value="AS_cat/multimer_dom_body"/>
</dbReference>
<dbReference type="InterPro" id="IPR014729">
    <property type="entry name" value="Rossmann-like_a/b/a_fold"/>
</dbReference>
<dbReference type="NCBIfam" id="TIGR00032">
    <property type="entry name" value="argG"/>
    <property type="match status" value="1"/>
</dbReference>
<dbReference type="NCBIfam" id="NF001770">
    <property type="entry name" value="PRK00509.1"/>
    <property type="match status" value="1"/>
</dbReference>
<dbReference type="PANTHER" id="PTHR11587">
    <property type="entry name" value="ARGININOSUCCINATE SYNTHASE"/>
    <property type="match status" value="1"/>
</dbReference>
<dbReference type="PANTHER" id="PTHR11587:SF2">
    <property type="entry name" value="ARGININOSUCCINATE SYNTHASE"/>
    <property type="match status" value="1"/>
</dbReference>
<dbReference type="Pfam" id="PF20979">
    <property type="entry name" value="Arginosuc_syn_C"/>
    <property type="match status" value="1"/>
</dbReference>
<dbReference type="Pfam" id="PF00764">
    <property type="entry name" value="Arginosuc_synth"/>
    <property type="match status" value="1"/>
</dbReference>
<dbReference type="SUPFAM" id="SSF52402">
    <property type="entry name" value="Adenine nucleotide alpha hydrolases-like"/>
    <property type="match status" value="1"/>
</dbReference>
<dbReference type="SUPFAM" id="SSF69864">
    <property type="entry name" value="Argininosuccinate synthetase, C-terminal domain"/>
    <property type="match status" value="1"/>
</dbReference>
<dbReference type="PROSITE" id="PS00564">
    <property type="entry name" value="ARGININOSUCCIN_SYN_1"/>
    <property type="match status" value="1"/>
</dbReference>
<dbReference type="PROSITE" id="PS00565">
    <property type="entry name" value="ARGININOSUCCIN_SYN_2"/>
    <property type="match status" value="1"/>
</dbReference>
<gene>
    <name evidence="1" type="primary">argG</name>
    <name type="ordered locus">BMEA_A0077</name>
</gene>
<organism>
    <name type="scientific">Brucella melitensis biotype 2 (strain ATCC 23457)</name>
    <dbReference type="NCBI Taxonomy" id="546272"/>
    <lineage>
        <taxon>Bacteria</taxon>
        <taxon>Pseudomonadati</taxon>
        <taxon>Pseudomonadota</taxon>
        <taxon>Alphaproteobacteria</taxon>
        <taxon>Hyphomicrobiales</taxon>
        <taxon>Brucellaceae</taxon>
        <taxon>Brucella/Ochrobactrum group</taxon>
        <taxon>Brucella</taxon>
    </lineage>
</organism>
<comment type="catalytic activity">
    <reaction evidence="1">
        <text>L-citrulline + L-aspartate + ATP = 2-(N(omega)-L-arginino)succinate + AMP + diphosphate + H(+)</text>
        <dbReference type="Rhea" id="RHEA:10932"/>
        <dbReference type="ChEBI" id="CHEBI:15378"/>
        <dbReference type="ChEBI" id="CHEBI:29991"/>
        <dbReference type="ChEBI" id="CHEBI:30616"/>
        <dbReference type="ChEBI" id="CHEBI:33019"/>
        <dbReference type="ChEBI" id="CHEBI:57472"/>
        <dbReference type="ChEBI" id="CHEBI:57743"/>
        <dbReference type="ChEBI" id="CHEBI:456215"/>
        <dbReference type="EC" id="6.3.4.5"/>
    </reaction>
</comment>
<comment type="pathway">
    <text evidence="1">Amino-acid biosynthesis; L-arginine biosynthesis; L-arginine from L-ornithine and carbamoyl phosphate: step 2/3.</text>
</comment>
<comment type="subunit">
    <text evidence="1">Homotetramer.</text>
</comment>
<comment type="subcellular location">
    <subcellularLocation>
        <location evidence="1">Cytoplasm</location>
    </subcellularLocation>
</comment>
<comment type="similarity">
    <text evidence="1">Belongs to the argininosuccinate synthase family. Type 1 subfamily.</text>
</comment>
<proteinExistence type="inferred from homology"/>
<protein>
    <recommendedName>
        <fullName evidence="1">Argininosuccinate synthase</fullName>
        <ecNumber evidence="1">6.3.4.5</ecNumber>
    </recommendedName>
    <alternativeName>
        <fullName evidence="1">Citrulline--aspartate ligase</fullName>
    </alternativeName>
</protein>
<reference key="1">
    <citation type="submission" date="2009-03" db="EMBL/GenBank/DDBJ databases">
        <title>Brucella melitensis ATCC 23457 whole genome shotgun sequencing project.</title>
        <authorList>
            <person name="Setubal J.C."/>
            <person name="Boyle S."/>
            <person name="Crasta O.R."/>
            <person name="Gillespie J.J."/>
            <person name="Kenyon R.W."/>
            <person name="Lu J."/>
            <person name="Mane S."/>
            <person name="Nagrani S."/>
            <person name="Shallom J.M."/>
            <person name="Shallom S."/>
            <person name="Shukla M."/>
            <person name="Snyder E.E."/>
            <person name="Sobral B.W."/>
            <person name="Wattam A.R."/>
            <person name="Will R."/>
            <person name="Williams K."/>
            <person name="Yoo H."/>
            <person name="Munk C."/>
            <person name="Tapia R."/>
            <person name="Han C."/>
            <person name="Detter J.C."/>
            <person name="Bruce D."/>
            <person name="Brettin T.S."/>
        </authorList>
    </citation>
    <scope>NUCLEOTIDE SEQUENCE [LARGE SCALE GENOMIC DNA]</scope>
    <source>
        <strain>ATCC 23457</strain>
    </source>
</reference>
<feature type="chain" id="PRO_1000191884" description="Argininosuccinate synthase">
    <location>
        <begin position="1"/>
        <end position="406"/>
    </location>
</feature>
<feature type="binding site" evidence="1">
    <location>
        <begin position="13"/>
        <end position="21"/>
    </location>
    <ligand>
        <name>ATP</name>
        <dbReference type="ChEBI" id="CHEBI:30616"/>
    </ligand>
</feature>
<feature type="binding site" evidence="1">
    <location>
        <position position="40"/>
    </location>
    <ligand>
        <name>ATP</name>
        <dbReference type="ChEBI" id="CHEBI:30616"/>
    </ligand>
</feature>
<feature type="binding site" evidence="1">
    <location>
        <position position="91"/>
    </location>
    <ligand>
        <name>L-citrulline</name>
        <dbReference type="ChEBI" id="CHEBI:57743"/>
    </ligand>
</feature>
<feature type="binding site" evidence="1">
    <location>
        <position position="96"/>
    </location>
    <ligand>
        <name>L-citrulline</name>
        <dbReference type="ChEBI" id="CHEBI:57743"/>
    </ligand>
</feature>
<feature type="binding site" evidence="1">
    <location>
        <position position="121"/>
    </location>
    <ligand>
        <name>ATP</name>
        <dbReference type="ChEBI" id="CHEBI:30616"/>
    </ligand>
</feature>
<feature type="binding site" evidence="1">
    <location>
        <position position="123"/>
    </location>
    <ligand>
        <name>L-aspartate</name>
        <dbReference type="ChEBI" id="CHEBI:29991"/>
    </ligand>
</feature>
<feature type="binding site" evidence="1">
    <location>
        <position position="127"/>
    </location>
    <ligand>
        <name>L-aspartate</name>
        <dbReference type="ChEBI" id="CHEBI:29991"/>
    </ligand>
</feature>
<feature type="binding site" evidence="1">
    <location>
        <position position="127"/>
    </location>
    <ligand>
        <name>L-citrulline</name>
        <dbReference type="ChEBI" id="CHEBI:57743"/>
    </ligand>
</feature>
<feature type="binding site" evidence="1">
    <location>
        <position position="128"/>
    </location>
    <ligand>
        <name>L-aspartate</name>
        <dbReference type="ChEBI" id="CHEBI:29991"/>
    </ligand>
</feature>
<feature type="binding site" evidence="1">
    <location>
        <position position="131"/>
    </location>
    <ligand>
        <name>L-citrulline</name>
        <dbReference type="ChEBI" id="CHEBI:57743"/>
    </ligand>
</feature>
<feature type="binding site" evidence="1">
    <location>
        <position position="182"/>
    </location>
    <ligand>
        <name>L-citrulline</name>
        <dbReference type="ChEBI" id="CHEBI:57743"/>
    </ligand>
</feature>
<feature type="binding site" evidence="1">
    <location>
        <position position="191"/>
    </location>
    <ligand>
        <name>L-citrulline</name>
        <dbReference type="ChEBI" id="CHEBI:57743"/>
    </ligand>
</feature>
<feature type="binding site" evidence="1">
    <location>
        <position position="267"/>
    </location>
    <ligand>
        <name>L-citrulline</name>
        <dbReference type="ChEBI" id="CHEBI:57743"/>
    </ligand>
</feature>
<feature type="binding site" evidence="1">
    <location>
        <position position="279"/>
    </location>
    <ligand>
        <name>L-citrulline</name>
        <dbReference type="ChEBI" id="CHEBI:57743"/>
    </ligand>
</feature>
<sequence length="406" mass="45273">MSKWKDVKKVVLAYSGGLDTSIILKWLQTELGAEVVTFTADLGQGEELEPARKKAEMLGIKEIFIEDVREEFVRDFVFPMFRANAVYEGVYLLGTSIARPLISKHLIDIAKKTGADAIAHGATGKGNDQVRFELSAYALNPDIKIIAPWRDWSFKSRTQLLEFAEQHQIPVAKDKKGEAPFSVDANLLHSSSEGKVLEDPSQEAPEYVHMRTISPETAPDKATIIKIGFEKGDAVSINGERLSPATLLAKLNDYGRDNGIGRLDLVENRFVGMKSRGVYETPGGTILLAAHRAIESITLDRGAAHLKDELMPRYAELIYYGFWFSPEREMLQAAIDHSQRHVEGEVTLKLYKGNVMVIGRESAKSLYSDKLVTFEDDQGAYDQKDAAGFIKLNALRLRTLAARDRK</sequence>